<keyword id="KW-1185">Reference proteome</keyword>
<keyword id="KW-0687">Ribonucleoprotein</keyword>
<keyword id="KW-0689">Ribosomal protein</keyword>
<keyword id="KW-0694">RNA-binding</keyword>
<keyword id="KW-0699">rRNA-binding</keyword>
<comment type="function">
    <text evidence="1">One of two assembly initiator proteins, it binds directly to the 5'-end of the 23S rRNA, where it nucleates assembly of the 50S subunit.</text>
</comment>
<comment type="function">
    <text evidence="1">One of the proteins that surrounds the polypeptide exit tunnel on the outside of the subunit.</text>
</comment>
<comment type="subunit">
    <text evidence="1">Part of the 50S ribosomal subunit.</text>
</comment>
<comment type="similarity">
    <text evidence="1">Belongs to the universal ribosomal protein uL24 family.</text>
</comment>
<gene>
    <name evidence="1" type="primary">rplX</name>
    <name type="ordered locus">ETA_31520</name>
</gene>
<proteinExistence type="inferred from homology"/>
<feature type="chain" id="PRO_1000141997" description="Large ribosomal subunit protein uL24">
    <location>
        <begin position="1"/>
        <end position="104"/>
    </location>
</feature>
<reference key="1">
    <citation type="journal article" date="2008" name="Environ. Microbiol.">
        <title>The genome of Erwinia tasmaniensis strain Et1/99, a non-pathogenic bacterium in the genus Erwinia.</title>
        <authorList>
            <person name="Kube M."/>
            <person name="Migdoll A.M."/>
            <person name="Mueller I."/>
            <person name="Kuhl H."/>
            <person name="Beck A."/>
            <person name="Reinhardt R."/>
            <person name="Geider K."/>
        </authorList>
    </citation>
    <scope>NUCLEOTIDE SEQUENCE [LARGE SCALE GENOMIC DNA]</scope>
    <source>
        <strain>DSM 17950 / CFBP 7177 / CIP 109463 / NCPPB 4357 / Et1/99</strain>
    </source>
</reference>
<protein>
    <recommendedName>
        <fullName evidence="1">Large ribosomal subunit protein uL24</fullName>
    </recommendedName>
    <alternativeName>
        <fullName evidence="2">50S ribosomal protein L24</fullName>
    </alternativeName>
</protein>
<accession>B2VK53</accession>
<evidence type="ECO:0000255" key="1">
    <source>
        <dbReference type="HAMAP-Rule" id="MF_01326"/>
    </source>
</evidence>
<evidence type="ECO:0000305" key="2"/>
<sequence>MAAKIRRDDEVIVLTGKDKGKRGKVKNVLSSGKIIVEGINLVKKHQKPVPALNQPGGIVEKEAALQISNVALFNSATGKADRVGFRFEDGKKVRFFKSNSETIK</sequence>
<dbReference type="EMBL" id="CU468135">
    <property type="protein sequence ID" value="CAO98198.1"/>
    <property type="molecule type" value="Genomic_DNA"/>
</dbReference>
<dbReference type="RefSeq" id="WP_012442840.1">
    <property type="nucleotide sequence ID" value="NC_010694.1"/>
</dbReference>
<dbReference type="SMR" id="B2VK53"/>
<dbReference type="STRING" id="465817.ETA_31520"/>
<dbReference type="KEGG" id="eta:ETA_31520"/>
<dbReference type="eggNOG" id="COG0198">
    <property type="taxonomic scope" value="Bacteria"/>
</dbReference>
<dbReference type="HOGENOM" id="CLU_093315_2_2_6"/>
<dbReference type="OrthoDB" id="9807419at2"/>
<dbReference type="Proteomes" id="UP000001726">
    <property type="component" value="Chromosome"/>
</dbReference>
<dbReference type="GO" id="GO:1990904">
    <property type="term" value="C:ribonucleoprotein complex"/>
    <property type="evidence" value="ECO:0007669"/>
    <property type="project" value="UniProtKB-KW"/>
</dbReference>
<dbReference type="GO" id="GO:0005840">
    <property type="term" value="C:ribosome"/>
    <property type="evidence" value="ECO:0007669"/>
    <property type="project" value="UniProtKB-KW"/>
</dbReference>
<dbReference type="GO" id="GO:0019843">
    <property type="term" value="F:rRNA binding"/>
    <property type="evidence" value="ECO:0007669"/>
    <property type="project" value="UniProtKB-UniRule"/>
</dbReference>
<dbReference type="GO" id="GO:0003735">
    <property type="term" value="F:structural constituent of ribosome"/>
    <property type="evidence" value="ECO:0007669"/>
    <property type="project" value="InterPro"/>
</dbReference>
<dbReference type="GO" id="GO:0006412">
    <property type="term" value="P:translation"/>
    <property type="evidence" value="ECO:0007669"/>
    <property type="project" value="UniProtKB-UniRule"/>
</dbReference>
<dbReference type="CDD" id="cd06089">
    <property type="entry name" value="KOW_RPL26"/>
    <property type="match status" value="1"/>
</dbReference>
<dbReference type="FunFam" id="2.30.30.30:FF:000004">
    <property type="entry name" value="50S ribosomal protein L24"/>
    <property type="match status" value="1"/>
</dbReference>
<dbReference type="Gene3D" id="2.30.30.30">
    <property type="match status" value="1"/>
</dbReference>
<dbReference type="HAMAP" id="MF_01326_B">
    <property type="entry name" value="Ribosomal_uL24_B"/>
    <property type="match status" value="1"/>
</dbReference>
<dbReference type="InterPro" id="IPR005824">
    <property type="entry name" value="KOW"/>
</dbReference>
<dbReference type="InterPro" id="IPR014722">
    <property type="entry name" value="Rib_uL2_dom2"/>
</dbReference>
<dbReference type="InterPro" id="IPR003256">
    <property type="entry name" value="Ribosomal_uL24"/>
</dbReference>
<dbReference type="InterPro" id="IPR005825">
    <property type="entry name" value="Ribosomal_uL24_CS"/>
</dbReference>
<dbReference type="InterPro" id="IPR041988">
    <property type="entry name" value="Ribosomal_uL24_KOW"/>
</dbReference>
<dbReference type="InterPro" id="IPR008991">
    <property type="entry name" value="Translation_prot_SH3-like_sf"/>
</dbReference>
<dbReference type="NCBIfam" id="TIGR01079">
    <property type="entry name" value="rplX_bact"/>
    <property type="match status" value="1"/>
</dbReference>
<dbReference type="PANTHER" id="PTHR12903">
    <property type="entry name" value="MITOCHONDRIAL RIBOSOMAL PROTEIN L24"/>
    <property type="match status" value="1"/>
</dbReference>
<dbReference type="Pfam" id="PF00467">
    <property type="entry name" value="KOW"/>
    <property type="match status" value="1"/>
</dbReference>
<dbReference type="Pfam" id="PF17136">
    <property type="entry name" value="ribosomal_L24"/>
    <property type="match status" value="1"/>
</dbReference>
<dbReference type="SMART" id="SM00739">
    <property type="entry name" value="KOW"/>
    <property type="match status" value="1"/>
</dbReference>
<dbReference type="SUPFAM" id="SSF50104">
    <property type="entry name" value="Translation proteins SH3-like domain"/>
    <property type="match status" value="1"/>
</dbReference>
<dbReference type="PROSITE" id="PS01108">
    <property type="entry name" value="RIBOSOMAL_L24"/>
    <property type="match status" value="1"/>
</dbReference>
<name>RL24_ERWT9</name>
<organism>
    <name type="scientific">Erwinia tasmaniensis (strain DSM 17950 / CFBP 7177 / CIP 109463 / NCPPB 4357 / Et1/99)</name>
    <dbReference type="NCBI Taxonomy" id="465817"/>
    <lineage>
        <taxon>Bacteria</taxon>
        <taxon>Pseudomonadati</taxon>
        <taxon>Pseudomonadota</taxon>
        <taxon>Gammaproteobacteria</taxon>
        <taxon>Enterobacterales</taxon>
        <taxon>Erwiniaceae</taxon>
        <taxon>Erwinia</taxon>
    </lineage>
</organism>